<sequence>MQNLVILGATGSIGKSTLDVIKRNPERYRAFALVAATSVERMRDLCIEHRPRYAHMVDESAAKRLADALPTGLGIEVSSGDEALLGLVTAAEVDTVMAAIVGAAGLLPTLAAVRAGKRVLLANKEALVMSGELFMEETKKSGAQLLPVDSEHNAIFQCLPEQVQREIGHCDLSAAGISHILLTGSGGPFLTSPLDTLATMTPAQACKHPNWSMGPKISVDSATMMNKGLEFIEARWLFNTARDELKVVIHPQSVIHSMVQYRDGSVLAQMGNPDMRTPIAHAMAYPQRISAGVEPLDFFKVGHLSFCEPDYSRFPCLKLAMDACHQGQEATTVLNAANEVAVAAFLDGRIGFTDIAVINGECLGKIAKTHLDSLDAILALDWEARRLANQLISRV</sequence>
<organism>
    <name type="scientific">Shewanella amazonensis (strain ATCC BAA-1098 / SB2B)</name>
    <dbReference type="NCBI Taxonomy" id="326297"/>
    <lineage>
        <taxon>Bacteria</taxon>
        <taxon>Pseudomonadati</taxon>
        <taxon>Pseudomonadota</taxon>
        <taxon>Gammaproteobacteria</taxon>
        <taxon>Alteromonadales</taxon>
        <taxon>Shewanellaceae</taxon>
        <taxon>Shewanella</taxon>
    </lineage>
</organism>
<comment type="function">
    <text evidence="1">Catalyzes the NADPH-dependent rearrangement and reduction of 1-deoxy-D-xylulose-5-phosphate (DXP) to 2-C-methyl-D-erythritol 4-phosphate (MEP).</text>
</comment>
<comment type="catalytic activity">
    <reaction evidence="1">
        <text>2-C-methyl-D-erythritol 4-phosphate + NADP(+) = 1-deoxy-D-xylulose 5-phosphate + NADPH + H(+)</text>
        <dbReference type="Rhea" id="RHEA:13717"/>
        <dbReference type="ChEBI" id="CHEBI:15378"/>
        <dbReference type="ChEBI" id="CHEBI:57783"/>
        <dbReference type="ChEBI" id="CHEBI:57792"/>
        <dbReference type="ChEBI" id="CHEBI:58262"/>
        <dbReference type="ChEBI" id="CHEBI:58349"/>
        <dbReference type="EC" id="1.1.1.267"/>
    </reaction>
    <physiologicalReaction direction="right-to-left" evidence="1">
        <dbReference type="Rhea" id="RHEA:13719"/>
    </physiologicalReaction>
</comment>
<comment type="cofactor">
    <cofactor evidence="1">
        <name>Mg(2+)</name>
        <dbReference type="ChEBI" id="CHEBI:18420"/>
    </cofactor>
    <cofactor evidence="1">
        <name>Mn(2+)</name>
        <dbReference type="ChEBI" id="CHEBI:29035"/>
    </cofactor>
</comment>
<comment type="pathway">
    <text evidence="1">Isoprenoid biosynthesis; isopentenyl diphosphate biosynthesis via DXP pathway; isopentenyl diphosphate from 1-deoxy-D-xylulose 5-phosphate: step 1/6.</text>
</comment>
<comment type="similarity">
    <text evidence="1">Belongs to the DXR family.</text>
</comment>
<evidence type="ECO:0000255" key="1">
    <source>
        <dbReference type="HAMAP-Rule" id="MF_00183"/>
    </source>
</evidence>
<proteinExistence type="inferred from homology"/>
<reference key="1">
    <citation type="submission" date="2006-12" db="EMBL/GenBank/DDBJ databases">
        <title>Complete sequence of Shewanella amazonensis SB2B.</title>
        <authorList>
            <consortium name="US DOE Joint Genome Institute"/>
            <person name="Copeland A."/>
            <person name="Lucas S."/>
            <person name="Lapidus A."/>
            <person name="Barry K."/>
            <person name="Detter J.C."/>
            <person name="Glavina del Rio T."/>
            <person name="Hammon N."/>
            <person name="Israni S."/>
            <person name="Dalin E."/>
            <person name="Tice H."/>
            <person name="Pitluck S."/>
            <person name="Munk A.C."/>
            <person name="Brettin T."/>
            <person name="Bruce D."/>
            <person name="Han C."/>
            <person name="Tapia R."/>
            <person name="Gilna P."/>
            <person name="Schmutz J."/>
            <person name="Larimer F."/>
            <person name="Land M."/>
            <person name="Hauser L."/>
            <person name="Kyrpides N."/>
            <person name="Mikhailova N."/>
            <person name="Fredrickson J."/>
            <person name="Richardson P."/>
        </authorList>
    </citation>
    <scope>NUCLEOTIDE SEQUENCE [LARGE SCALE GENOMIC DNA]</scope>
    <source>
        <strain>ATCC BAA-1098 / SB2B</strain>
    </source>
</reference>
<dbReference type="EC" id="1.1.1.267" evidence="1"/>
<dbReference type="EMBL" id="CP000507">
    <property type="protein sequence ID" value="ABL99352.1"/>
    <property type="molecule type" value="Genomic_DNA"/>
</dbReference>
<dbReference type="RefSeq" id="WP_011759261.1">
    <property type="nucleotide sequence ID" value="NC_008700.1"/>
</dbReference>
<dbReference type="SMR" id="A1S4P6"/>
<dbReference type="STRING" id="326297.Sama_1145"/>
<dbReference type="KEGG" id="saz:Sama_1145"/>
<dbReference type="eggNOG" id="COG0743">
    <property type="taxonomic scope" value="Bacteria"/>
</dbReference>
<dbReference type="HOGENOM" id="CLU_035714_4_0_6"/>
<dbReference type="OrthoDB" id="9806546at2"/>
<dbReference type="UniPathway" id="UPA00056">
    <property type="reaction ID" value="UER00092"/>
</dbReference>
<dbReference type="Proteomes" id="UP000009175">
    <property type="component" value="Chromosome"/>
</dbReference>
<dbReference type="GO" id="GO:0030604">
    <property type="term" value="F:1-deoxy-D-xylulose-5-phosphate reductoisomerase activity"/>
    <property type="evidence" value="ECO:0007669"/>
    <property type="project" value="UniProtKB-UniRule"/>
</dbReference>
<dbReference type="GO" id="GO:0030145">
    <property type="term" value="F:manganese ion binding"/>
    <property type="evidence" value="ECO:0007669"/>
    <property type="project" value="TreeGrafter"/>
</dbReference>
<dbReference type="GO" id="GO:0070402">
    <property type="term" value="F:NADPH binding"/>
    <property type="evidence" value="ECO:0007669"/>
    <property type="project" value="InterPro"/>
</dbReference>
<dbReference type="GO" id="GO:0051484">
    <property type="term" value="P:isopentenyl diphosphate biosynthetic process, methylerythritol 4-phosphate pathway involved in terpenoid biosynthetic process"/>
    <property type="evidence" value="ECO:0007669"/>
    <property type="project" value="TreeGrafter"/>
</dbReference>
<dbReference type="FunFam" id="1.10.1740.10:FF:000004">
    <property type="entry name" value="1-deoxy-D-xylulose 5-phosphate reductoisomerase"/>
    <property type="match status" value="1"/>
</dbReference>
<dbReference type="FunFam" id="3.40.50.720:FF:000045">
    <property type="entry name" value="1-deoxy-D-xylulose 5-phosphate reductoisomerase"/>
    <property type="match status" value="1"/>
</dbReference>
<dbReference type="Gene3D" id="1.10.1740.10">
    <property type="match status" value="1"/>
</dbReference>
<dbReference type="Gene3D" id="3.40.50.720">
    <property type="entry name" value="NAD(P)-binding Rossmann-like Domain"/>
    <property type="match status" value="1"/>
</dbReference>
<dbReference type="HAMAP" id="MF_00183">
    <property type="entry name" value="DXP_reductoisom"/>
    <property type="match status" value="1"/>
</dbReference>
<dbReference type="InterPro" id="IPR003821">
    <property type="entry name" value="DXP_reductoisomerase"/>
</dbReference>
<dbReference type="InterPro" id="IPR013644">
    <property type="entry name" value="DXP_reductoisomerase_C"/>
</dbReference>
<dbReference type="InterPro" id="IPR013512">
    <property type="entry name" value="DXP_reductoisomerase_N"/>
</dbReference>
<dbReference type="InterPro" id="IPR026877">
    <property type="entry name" value="DXPR_C"/>
</dbReference>
<dbReference type="InterPro" id="IPR036169">
    <property type="entry name" value="DXPR_C_sf"/>
</dbReference>
<dbReference type="InterPro" id="IPR036291">
    <property type="entry name" value="NAD(P)-bd_dom_sf"/>
</dbReference>
<dbReference type="NCBIfam" id="TIGR00243">
    <property type="entry name" value="Dxr"/>
    <property type="match status" value="1"/>
</dbReference>
<dbReference type="NCBIfam" id="NF003938">
    <property type="entry name" value="PRK05447.1-1"/>
    <property type="match status" value="1"/>
</dbReference>
<dbReference type="NCBIfam" id="NF009114">
    <property type="entry name" value="PRK12464.1"/>
    <property type="match status" value="1"/>
</dbReference>
<dbReference type="PANTHER" id="PTHR30525">
    <property type="entry name" value="1-DEOXY-D-XYLULOSE 5-PHOSPHATE REDUCTOISOMERASE"/>
    <property type="match status" value="1"/>
</dbReference>
<dbReference type="PANTHER" id="PTHR30525:SF0">
    <property type="entry name" value="1-DEOXY-D-XYLULOSE 5-PHOSPHATE REDUCTOISOMERASE, CHLOROPLASTIC"/>
    <property type="match status" value="1"/>
</dbReference>
<dbReference type="Pfam" id="PF08436">
    <property type="entry name" value="DXP_redisom_C"/>
    <property type="match status" value="1"/>
</dbReference>
<dbReference type="Pfam" id="PF02670">
    <property type="entry name" value="DXP_reductoisom"/>
    <property type="match status" value="1"/>
</dbReference>
<dbReference type="Pfam" id="PF13288">
    <property type="entry name" value="DXPR_C"/>
    <property type="match status" value="1"/>
</dbReference>
<dbReference type="PIRSF" id="PIRSF006205">
    <property type="entry name" value="Dxp_reductismrs"/>
    <property type="match status" value="1"/>
</dbReference>
<dbReference type="SUPFAM" id="SSF69055">
    <property type="entry name" value="1-deoxy-D-xylulose-5-phosphate reductoisomerase, C-terminal domain"/>
    <property type="match status" value="1"/>
</dbReference>
<dbReference type="SUPFAM" id="SSF55347">
    <property type="entry name" value="Glyceraldehyde-3-phosphate dehydrogenase-like, C-terminal domain"/>
    <property type="match status" value="1"/>
</dbReference>
<dbReference type="SUPFAM" id="SSF51735">
    <property type="entry name" value="NAD(P)-binding Rossmann-fold domains"/>
    <property type="match status" value="1"/>
</dbReference>
<accession>A1S4P6</accession>
<protein>
    <recommendedName>
        <fullName evidence="1">1-deoxy-D-xylulose 5-phosphate reductoisomerase</fullName>
        <shortName evidence="1">DXP reductoisomerase</shortName>
        <ecNumber evidence="1">1.1.1.267</ecNumber>
    </recommendedName>
    <alternativeName>
        <fullName evidence="1">1-deoxyxylulose-5-phosphate reductoisomerase</fullName>
    </alternativeName>
    <alternativeName>
        <fullName evidence="1">2-C-methyl-D-erythritol 4-phosphate synthase</fullName>
    </alternativeName>
</protein>
<gene>
    <name evidence="1" type="primary">dxr</name>
    <name type="ordered locus">Sama_1145</name>
</gene>
<name>DXR_SHEAM</name>
<keyword id="KW-0414">Isoprene biosynthesis</keyword>
<keyword id="KW-0464">Manganese</keyword>
<keyword id="KW-0479">Metal-binding</keyword>
<keyword id="KW-0521">NADP</keyword>
<keyword id="KW-0560">Oxidoreductase</keyword>
<keyword id="KW-1185">Reference proteome</keyword>
<feature type="chain" id="PRO_1000020306" description="1-deoxy-D-xylulose 5-phosphate reductoisomerase">
    <location>
        <begin position="1"/>
        <end position="395"/>
    </location>
</feature>
<feature type="binding site" evidence="1">
    <location>
        <position position="10"/>
    </location>
    <ligand>
        <name>NADPH</name>
        <dbReference type="ChEBI" id="CHEBI:57783"/>
    </ligand>
</feature>
<feature type="binding site" evidence="1">
    <location>
        <position position="11"/>
    </location>
    <ligand>
        <name>NADPH</name>
        <dbReference type="ChEBI" id="CHEBI:57783"/>
    </ligand>
</feature>
<feature type="binding site" evidence="1">
    <location>
        <position position="12"/>
    </location>
    <ligand>
        <name>NADPH</name>
        <dbReference type="ChEBI" id="CHEBI:57783"/>
    </ligand>
</feature>
<feature type="binding site" evidence="1">
    <location>
        <position position="13"/>
    </location>
    <ligand>
        <name>NADPH</name>
        <dbReference type="ChEBI" id="CHEBI:57783"/>
    </ligand>
</feature>
<feature type="binding site" evidence="1">
    <location>
        <position position="36"/>
    </location>
    <ligand>
        <name>NADPH</name>
        <dbReference type="ChEBI" id="CHEBI:57783"/>
    </ligand>
</feature>
<feature type="binding site" evidence="1">
    <location>
        <position position="123"/>
    </location>
    <ligand>
        <name>NADPH</name>
        <dbReference type="ChEBI" id="CHEBI:57783"/>
    </ligand>
</feature>
<feature type="binding site" evidence="1">
    <location>
        <position position="124"/>
    </location>
    <ligand>
        <name>1-deoxy-D-xylulose 5-phosphate</name>
        <dbReference type="ChEBI" id="CHEBI:57792"/>
    </ligand>
</feature>
<feature type="binding site" evidence="1">
    <location>
        <position position="125"/>
    </location>
    <ligand>
        <name>NADPH</name>
        <dbReference type="ChEBI" id="CHEBI:57783"/>
    </ligand>
</feature>
<feature type="binding site" evidence="1">
    <location>
        <position position="149"/>
    </location>
    <ligand>
        <name>Mn(2+)</name>
        <dbReference type="ChEBI" id="CHEBI:29035"/>
    </ligand>
</feature>
<feature type="binding site" evidence="1">
    <location>
        <position position="150"/>
    </location>
    <ligand>
        <name>1-deoxy-D-xylulose 5-phosphate</name>
        <dbReference type="ChEBI" id="CHEBI:57792"/>
    </ligand>
</feature>
<feature type="binding site" evidence="1">
    <location>
        <position position="151"/>
    </location>
    <ligand>
        <name>1-deoxy-D-xylulose 5-phosphate</name>
        <dbReference type="ChEBI" id="CHEBI:57792"/>
    </ligand>
</feature>
<feature type="binding site" evidence="1">
    <location>
        <position position="151"/>
    </location>
    <ligand>
        <name>Mn(2+)</name>
        <dbReference type="ChEBI" id="CHEBI:29035"/>
    </ligand>
</feature>
<feature type="binding site" evidence="1">
    <location>
        <position position="185"/>
    </location>
    <ligand>
        <name>1-deoxy-D-xylulose 5-phosphate</name>
        <dbReference type="ChEBI" id="CHEBI:57792"/>
    </ligand>
</feature>
<feature type="binding site" evidence="1">
    <location>
        <position position="208"/>
    </location>
    <ligand>
        <name>1-deoxy-D-xylulose 5-phosphate</name>
        <dbReference type="ChEBI" id="CHEBI:57792"/>
    </ligand>
</feature>
<feature type="binding site" evidence="1">
    <location>
        <position position="214"/>
    </location>
    <ligand>
        <name>NADPH</name>
        <dbReference type="ChEBI" id="CHEBI:57783"/>
    </ligand>
</feature>
<feature type="binding site" evidence="1">
    <location>
        <position position="221"/>
    </location>
    <ligand>
        <name>1-deoxy-D-xylulose 5-phosphate</name>
        <dbReference type="ChEBI" id="CHEBI:57792"/>
    </ligand>
</feature>
<feature type="binding site" evidence="1">
    <location>
        <position position="226"/>
    </location>
    <ligand>
        <name>1-deoxy-D-xylulose 5-phosphate</name>
        <dbReference type="ChEBI" id="CHEBI:57792"/>
    </ligand>
</feature>
<feature type="binding site" evidence="1">
    <location>
        <position position="227"/>
    </location>
    <ligand>
        <name>1-deoxy-D-xylulose 5-phosphate</name>
        <dbReference type="ChEBI" id="CHEBI:57792"/>
    </ligand>
</feature>
<feature type="binding site" evidence="1">
    <location>
        <position position="230"/>
    </location>
    <ligand>
        <name>1-deoxy-D-xylulose 5-phosphate</name>
        <dbReference type="ChEBI" id="CHEBI:57792"/>
    </ligand>
</feature>
<feature type="binding site" evidence="1">
    <location>
        <position position="230"/>
    </location>
    <ligand>
        <name>Mn(2+)</name>
        <dbReference type="ChEBI" id="CHEBI:29035"/>
    </ligand>
</feature>